<comment type="function">
    <text evidence="1">Chromatin-associated, histone tail-binding protein that represses transcription via recruitment of HDAC3 and nuclear hormone receptor corepressors.</text>
</comment>
<comment type="subunit">
    <text evidence="2">Forms homodimers (By similarity). Interacts with HDAC3 and nuclear hormone receptor corepressors (By similarity). Interacts via HBM with HCFC1 (By similarity).</text>
</comment>
<comment type="subcellular location">
    <subcellularLocation>
        <location evidence="1">Nucleus</location>
    </subcellularLocation>
    <subcellularLocation>
        <location evidence="1">Chromosome</location>
    </subcellularLocation>
</comment>
<keyword id="KW-0158">Chromosome</keyword>
<keyword id="KW-0238">DNA-binding</keyword>
<keyword id="KW-0479">Metal-binding</keyword>
<keyword id="KW-0539">Nucleus</keyword>
<keyword id="KW-0597">Phosphoprotein</keyword>
<keyword id="KW-1185">Reference proteome</keyword>
<keyword id="KW-0804">Transcription</keyword>
<keyword id="KW-0805">Transcription regulation</keyword>
<keyword id="KW-0862">Zinc</keyword>
<keyword id="KW-0863">Zinc-finger</keyword>
<dbReference type="EMBL" id="BC018221">
    <property type="protein sequence ID" value="AAH18221.1"/>
    <property type="molecule type" value="mRNA"/>
</dbReference>
<dbReference type="CCDS" id="CCDS28004.1"/>
<dbReference type="RefSeq" id="NP_081185.1">
    <property type="nucleotide sequence ID" value="NM_026909.2"/>
</dbReference>
<dbReference type="RefSeq" id="XP_006522574.1">
    <property type="nucleotide sequence ID" value="XM_006522511.5"/>
</dbReference>
<dbReference type="SMR" id="Q8VCZ3"/>
<dbReference type="BioGRID" id="213170">
    <property type="interactions" value="1"/>
</dbReference>
<dbReference type="FunCoup" id="Q8VCZ3">
    <property type="interactions" value="1915"/>
</dbReference>
<dbReference type="IntAct" id="Q8VCZ3">
    <property type="interactions" value="2"/>
</dbReference>
<dbReference type="STRING" id="10090.ENSMUSP00000097701"/>
<dbReference type="PhosphoSitePlus" id="Q8VCZ3"/>
<dbReference type="PaxDb" id="10090-ENSMUSP00000097701"/>
<dbReference type="ProteomicsDB" id="263173"/>
<dbReference type="Antibodypedia" id="314">
    <property type="antibodies" value="26 antibodies from 10 providers"/>
</dbReference>
<dbReference type="DNASU" id="69009"/>
<dbReference type="Ensembl" id="ENSMUST00000100125.12">
    <property type="protein sequence ID" value="ENSMUSP00000097701.4"/>
    <property type="gene ID" value="ENSMUSG00000022760.18"/>
</dbReference>
<dbReference type="Ensembl" id="ENSMUST00000231548.2">
    <property type="protein sequence ID" value="ENSMUSP00000156168.2"/>
    <property type="gene ID" value="ENSMUSG00000022760.18"/>
</dbReference>
<dbReference type="GeneID" id="69009"/>
<dbReference type="KEGG" id="mmu:69009"/>
<dbReference type="UCSC" id="uc007yld.1">
    <property type="organism name" value="mouse"/>
</dbReference>
<dbReference type="AGR" id="MGI:1916259"/>
<dbReference type="CTD" id="80764"/>
<dbReference type="MGI" id="MGI:1916259">
    <property type="gene designation" value="Thap7"/>
</dbReference>
<dbReference type="VEuPathDB" id="HostDB:ENSMUSG00000022760"/>
<dbReference type="eggNOG" id="ENOG502QT6V">
    <property type="taxonomic scope" value="Eukaryota"/>
</dbReference>
<dbReference type="GeneTree" id="ENSGT00730000111394"/>
<dbReference type="HOGENOM" id="CLU_050704_0_0_1"/>
<dbReference type="InParanoid" id="Q8VCZ3"/>
<dbReference type="OMA" id="YPPGPHD"/>
<dbReference type="OrthoDB" id="7312725at2759"/>
<dbReference type="PhylomeDB" id="Q8VCZ3"/>
<dbReference type="TreeFam" id="TF335838"/>
<dbReference type="BioGRID-ORCS" id="69009">
    <property type="hits" value="1 hit in 76 CRISPR screens"/>
</dbReference>
<dbReference type="ChiTaRS" id="Thap7">
    <property type="organism name" value="mouse"/>
</dbReference>
<dbReference type="PRO" id="PR:Q8VCZ3"/>
<dbReference type="Proteomes" id="UP000000589">
    <property type="component" value="Chromosome 16"/>
</dbReference>
<dbReference type="RNAct" id="Q8VCZ3">
    <property type="molecule type" value="protein"/>
</dbReference>
<dbReference type="Bgee" id="ENSMUSG00000022760">
    <property type="expression patterns" value="Expressed in bone fossa and 258 other cell types or tissues"/>
</dbReference>
<dbReference type="ExpressionAtlas" id="Q8VCZ3">
    <property type="expression patterns" value="baseline and differential"/>
</dbReference>
<dbReference type="GO" id="GO:0000785">
    <property type="term" value="C:chromatin"/>
    <property type="evidence" value="ECO:0007669"/>
    <property type="project" value="Ensembl"/>
</dbReference>
<dbReference type="GO" id="GO:0031965">
    <property type="term" value="C:nuclear membrane"/>
    <property type="evidence" value="ECO:0007669"/>
    <property type="project" value="Ensembl"/>
</dbReference>
<dbReference type="GO" id="GO:0016607">
    <property type="term" value="C:nuclear speck"/>
    <property type="evidence" value="ECO:0007669"/>
    <property type="project" value="Ensembl"/>
</dbReference>
<dbReference type="GO" id="GO:0070742">
    <property type="term" value="F:C2H2 zinc finger domain binding"/>
    <property type="evidence" value="ECO:0007669"/>
    <property type="project" value="Ensembl"/>
</dbReference>
<dbReference type="GO" id="GO:0003677">
    <property type="term" value="F:DNA binding"/>
    <property type="evidence" value="ECO:0007669"/>
    <property type="project" value="UniProtKB-KW"/>
</dbReference>
<dbReference type="GO" id="GO:0140296">
    <property type="term" value="F:general transcription initiation factor binding"/>
    <property type="evidence" value="ECO:0007669"/>
    <property type="project" value="Ensembl"/>
</dbReference>
<dbReference type="GO" id="GO:0042826">
    <property type="term" value="F:histone deacetylase binding"/>
    <property type="evidence" value="ECO:0007669"/>
    <property type="project" value="Ensembl"/>
</dbReference>
<dbReference type="GO" id="GO:0140008">
    <property type="term" value="F:histone H4 reader activity"/>
    <property type="evidence" value="ECO:0007669"/>
    <property type="project" value="Ensembl"/>
</dbReference>
<dbReference type="GO" id="GO:0042802">
    <property type="term" value="F:identical protein binding"/>
    <property type="evidence" value="ECO:0007669"/>
    <property type="project" value="Ensembl"/>
</dbReference>
<dbReference type="GO" id="GO:0001222">
    <property type="term" value="F:transcription corepressor binding"/>
    <property type="evidence" value="ECO:0007669"/>
    <property type="project" value="Ensembl"/>
</dbReference>
<dbReference type="GO" id="GO:0008270">
    <property type="term" value="F:zinc ion binding"/>
    <property type="evidence" value="ECO:0007669"/>
    <property type="project" value="UniProtKB-KW"/>
</dbReference>
<dbReference type="GO" id="GO:0000122">
    <property type="term" value="P:negative regulation of transcription by RNA polymerase II"/>
    <property type="evidence" value="ECO:0007669"/>
    <property type="project" value="Ensembl"/>
</dbReference>
<dbReference type="InterPro" id="IPR026519">
    <property type="entry name" value="THAP7"/>
</dbReference>
<dbReference type="InterPro" id="IPR006612">
    <property type="entry name" value="THAP_Znf"/>
</dbReference>
<dbReference type="PANTHER" id="PTHR47502">
    <property type="entry name" value="THAP DOMAIN-CONTAINING PROTEIN 7"/>
    <property type="match status" value="1"/>
</dbReference>
<dbReference type="PANTHER" id="PTHR47502:SF1">
    <property type="entry name" value="THAP DOMAIN-CONTAINING PROTEIN 7"/>
    <property type="match status" value="1"/>
</dbReference>
<dbReference type="Pfam" id="PF05485">
    <property type="entry name" value="THAP"/>
    <property type="match status" value="1"/>
</dbReference>
<dbReference type="SMART" id="SM00692">
    <property type="entry name" value="DM3"/>
    <property type="match status" value="1"/>
</dbReference>
<dbReference type="SMART" id="SM00980">
    <property type="entry name" value="THAP"/>
    <property type="match status" value="1"/>
</dbReference>
<dbReference type="SUPFAM" id="SSF57716">
    <property type="entry name" value="Glucocorticoid receptor-like (DNA-binding domain)"/>
    <property type="match status" value="1"/>
</dbReference>
<dbReference type="PROSITE" id="PS50950">
    <property type="entry name" value="ZF_THAP"/>
    <property type="match status" value="1"/>
</dbReference>
<organism>
    <name type="scientific">Mus musculus</name>
    <name type="common">Mouse</name>
    <dbReference type="NCBI Taxonomy" id="10090"/>
    <lineage>
        <taxon>Eukaryota</taxon>
        <taxon>Metazoa</taxon>
        <taxon>Chordata</taxon>
        <taxon>Craniata</taxon>
        <taxon>Vertebrata</taxon>
        <taxon>Euteleostomi</taxon>
        <taxon>Mammalia</taxon>
        <taxon>Eutheria</taxon>
        <taxon>Euarchontoglires</taxon>
        <taxon>Glires</taxon>
        <taxon>Rodentia</taxon>
        <taxon>Myomorpha</taxon>
        <taxon>Muroidea</taxon>
        <taxon>Muridae</taxon>
        <taxon>Murinae</taxon>
        <taxon>Mus</taxon>
        <taxon>Mus</taxon>
    </lineage>
</organism>
<gene>
    <name type="primary">Thap7</name>
</gene>
<name>THAP7_MOUSE</name>
<accession>Q8VCZ3</accession>
<proteinExistence type="evidence at transcript level"/>
<reference key="1">
    <citation type="journal article" date="2004" name="Genome Res.">
        <title>The status, quality, and expansion of the NIH full-length cDNA project: the Mammalian Gene Collection (MGC).</title>
        <authorList>
            <consortium name="The MGC Project Team"/>
        </authorList>
    </citation>
    <scope>NUCLEOTIDE SEQUENCE [LARGE SCALE MRNA]</scope>
    <source>
        <tissue>Colon</tissue>
    </source>
</reference>
<feature type="chain" id="PRO_0000068649" description="THAP domain-containing protein 7">
    <location>
        <begin position="1"/>
        <end position="309"/>
    </location>
</feature>
<feature type="zinc finger region" description="THAP-type" evidence="3">
    <location>
        <begin position="1"/>
        <end position="93"/>
    </location>
</feature>
<feature type="region of interest" description="Disordered" evidence="4">
    <location>
        <begin position="176"/>
        <end position="210"/>
    </location>
</feature>
<feature type="short sequence motif" description="HCFC1-binding motif (HBM)" evidence="1">
    <location>
        <begin position="229"/>
        <end position="232"/>
    </location>
</feature>
<feature type="compositionally biased region" description="Pro residues" evidence="4">
    <location>
        <begin position="198"/>
        <end position="209"/>
    </location>
</feature>
<feature type="modified residue" description="Phosphoserine" evidence="2">
    <location>
        <position position="162"/>
    </location>
</feature>
<feature type="modified residue" description="Phosphoserine" evidence="2">
    <location>
        <position position="210"/>
    </location>
</feature>
<protein>
    <recommendedName>
        <fullName>THAP domain-containing protein 7</fullName>
    </recommendedName>
</protein>
<sequence length="309" mass="34593">MPRHCSAAGCCTRDTRETRNRGISFHRLPKKDNPRRGLWLANCQRLDPSGQGLWDPTSEYIYFCSKHFEENCFELVGISGYHRLKEGAVPTIFESFSKLRRTAKTKGHGYPPGLPDVSRLRRCRKRCSERQGPTTPFSPPPRADIICFPVEEASAPATLPASPAVRLDPGLNSPFSDLLGPLGAQADEAGCSTQPSPEQHPSPLEPQPASPSAYMLRLPPPAGAYIQNEHSYQVGSALLWKRRAEAALDALDKTQRQLQACKRREQRLRLRLTKLQQERAREKRAQADARQTLKDHVQDFAMQLSSSMA</sequence>
<evidence type="ECO:0000250" key="1"/>
<evidence type="ECO:0000250" key="2">
    <source>
        <dbReference type="UniProtKB" id="Q9BT49"/>
    </source>
</evidence>
<evidence type="ECO:0000255" key="3">
    <source>
        <dbReference type="PROSITE-ProRule" id="PRU00309"/>
    </source>
</evidence>
<evidence type="ECO:0000256" key="4">
    <source>
        <dbReference type="SAM" id="MobiDB-lite"/>
    </source>
</evidence>